<dbReference type="EC" id="2.3.2.27" evidence="1"/>
<dbReference type="EMBL" id="AK020617">
    <property type="protein sequence ID" value="BAB32149.2"/>
    <property type="status" value="ALT_INIT"/>
    <property type="molecule type" value="mRNA"/>
</dbReference>
<dbReference type="EMBL" id="AK078919">
    <property type="protein sequence ID" value="BAC37459.1"/>
    <property type="molecule type" value="mRNA"/>
</dbReference>
<dbReference type="EMBL" id="BC011492">
    <property type="protein sequence ID" value="AAH11492.3"/>
    <property type="molecule type" value="mRNA"/>
</dbReference>
<dbReference type="CCDS" id="CCDS51338.1"/>
<dbReference type="RefSeq" id="NP_080062.4">
    <property type="nucleotide sequence ID" value="NM_025786.3"/>
</dbReference>
<dbReference type="SMR" id="Q9D241"/>
<dbReference type="FunCoup" id="Q9D241">
    <property type="interactions" value="163"/>
</dbReference>
<dbReference type="STRING" id="10090.ENSMUSP00000111780"/>
<dbReference type="iPTMnet" id="Q9D241"/>
<dbReference type="PhosphoSitePlus" id="Q9D241"/>
<dbReference type="PaxDb" id="10090-ENSMUSP00000111780"/>
<dbReference type="ProteomicsDB" id="300493"/>
<dbReference type="Antibodypedia" id="29735">
    <property type="antibodies" value="103 antibodies from 21 providers"/>
</dbReference>
<dbReference type="DNASU" id="66825"/>
<dbReference type="Ensembl" id="ENSMUST00000116094.5">
    <property type="protein sequence ID" value="ENSMUSP00000111780.4"/>
    <property type="gene ID" value="ENSMUSG00000070661.8"/>
</dbReference>
<dbReference type="GeneID" id="66825"/>
<dbReference type="KEGG" id="mmu:66825"/>
<dbReference type="AGR" id="MGI:1914075"/>
<dbReference type="CTD" id="54546"/>
<dbReference type="MGI" id="MGI:1914075">
    <property type="gene designation" value="Rnf186"/>
</dbReference>
<dbReference type="VEuPathDB" id="HostDB:ENSMUSG00000070661"/>
<dbReference type="eggNOG" id="KOG2177">
    <property type="taxonomic scope" value="Eukaryota"/>
</dbReference>
<dbReference type="GeneTree" id="ENSGT00510000049175"/>
<dbReference type="InParanoid" id="Q9D241"/>
<dbReference type="OrthoDB" id="252722at2759"/>
<dbReference type="UniPathway" id="UPA00143"/>
<dbReference type="BioGRID-ORCS" id="66825">
    <property type="hits" value="4 hits in 78 CRISPR screens"/>
</dbReference>
<dbReference type="PRO" id="PR:Q9D241"/>
<dbReference type="Proteomes" id="UP000000589">
    <property type="component" value="Chromosome 4"/>
</dbReference>
<dbReference type="RNAct" id="Q9D241">
    <property type="molecule type" value="protein"/>
</dbReference>
<dbReference type="Bgee" id="ENSMUSG00000070661">
    <property type="expression patterns" value="Expressed in small intestine Peyer's patch and 59 other cell types or tissues"/>
</dbReference>
<dbReference type="ExpressionAtlas" id="Q9D241">
    <property type="expression patterns" value="baseline and differential"/>
</dbReference>
<dbReference type="GO" id="GO:0005789">
    <property type="term" value="C:endoplasmic reticulum membrane"/>
    <property type="evidence" value="ECO:0000250"/>
    <property type="project" value="UniProtKB"/>
</dbReference>
<dbReference type="GO" id="GO:0061630">
    <property type="term" value="F:ubiquitin protein ligase activity"/>
    <property type="evidence" value="ECO:0007669"/>
    <property type="project" value="Ensembl"/>
</dbReference>
<dbReference type="GO" id="GO:0031625">
    <property type="term" value="F:ubiquitin protein ligase binding"/>
    <property type="evidence" value="ECO:0007669"/>
    <property type="project" value="Ensembl"/>
</dbReference>
<dbReference type="GO" id="GO:0004842">
    <property type="term" value="F:ubiquitin-protein transferase activity"/>
    <property type="evidence" value="ECO:0000250"/>
    <property type="project" value="UniProtKB"/>
</dbReference>
<dbReference type="GO" id="GO:0008270">
    <property type="term" value="F:zinc ion binding"/>
    <property type="evidence" value="ECO:0007669"/>
    <property type="project" value="UniProtKB-KW"/>
</dbReference>
<dbReference type="GO" id="GO:0070059">
    <property type="term" value="P:intrinsic apoptotic signaling pathway in response to endoplasmic reticulum stress"/>
    <property type="evidence" value="ECO:0000250"/>
    <property type="project" value="UniProtKB"/>
</dbReference>
<dbReference type="GO" id="GO:0043161">
    <property type="term" value="P:proteasome-mediated ubiquitin-dependent protein catabolic process"/>
    <property type="evidence" value="ECO:0000250"/>
    <property type="project" value="UniProtKB"/>
</dbReference>
<dbReference type="GO" id="GO:0051865">
    <property type="term" value="P:protein autoubiquitination"/>
    <property type="evidence" value="ECO:0000250"/>
    <property type="project" value="UniProtKB"/>
</dbReference>
<dbReference type="GO" id="GO:0035519">
    <property type="term" value="P:protein K29-linked ubiquitination"/>
    <property type="evidence" value="ECO:0000250"/>
    <property type="project" value="UniProtKB"/>
</dbReference>
<dbReference type="GO" id="GO:0070534">
    <property type="term" value="P:protein K63-linked ubiquitination"/>
    <property type="evidence" value="ECO:0000250"/>
    <property type="project" value="UniProtKB"/>
</dbReference>
<dbReference type="GO" id="GO:0070585">
    <property type="term" value="P:protein localization to mitochondrion"/>
    <property type="evidence" value="ECO:0000250"/>
    <property type="project" value="UniProtKB"/>
</dbReference>
<dbReference type="GO" id="GO:2000785">
    <property type="term" value="P:regulation of autophagosome assembly"/>
    <property type="evidence" value="ECO:0007669"/>
    <property type="project" value="Ensembl"/>
</dbReference>
<dbReference type="FunFam" id="3.30.40.10:FF:000197">
    <property type="entry name" value="E3 ubiquitin-protein ligase RNF152"/>
    <property type="match status" value="1"/>
</dbReference>
<dbReference type="Gene3D" id="3.30.40.10">
    <property type="entry name" value="Zinc/RING finger domain, C3HC4 (zinc finger)"/>
    <property type="match status" value="1"/>
</dbReference>
<dbReference type="InterPro" id="IPR051435">
    <property type="entry name" value="RING_finger_E3_ubiq-ligases"/>
</dbReference>
<dbReference type="InterPro" id="IPR027370">
    <property type="entry name" value="Znf-RING_euk"/>
</dbReference>
<dbReference type="InterPro" id="IPR001841">
    <property type="entry name" value="Znf_RING"/>
</dbReference>
<dbReference type="InterPro" id="IPR013083">
    <property type="entry name" value="Znf_RING/FYVE/PHD"/>
</dbReference>
<dbReference type="InterPro" id="IPR017907">
    <property type="entry name" value="Znf_RING_CS"/>
</dbReference>
<dbReference type="PANTHER" id="PTHR22791:SF28">
    <property type="entry name" value="E3 UBIQUITIN-PROTEIN LIGASE RNF186"/>
    <property type="match status" value="1"/>
</dbReference>
<dbReference type="PANTHER" id="PTHR22791">
    <property type="entry name" value="RING-TYPE DOMAIN-CONTAINING PROTEIN"/>
    <property type="match status" value="1"/>
</dbReference>
<dbReference type="Pfam" id="PF13445">
    <property type="entry name" value="zf-RING_UBOX"/>
    <property type="match status" value="1"/>
</dbReference>
<dbReference type="SMART" id="SM00184">
    <property type="entry name" value="RING"/>
    <property type="match status" value="1"/>
</dbReference>
<dbReference type="SUPFAM" id="SSF57850">
    <property type="entry name" value="RING/U-box"/>
    <property type="match status" value="1"/>
</dbReference>
<dbReference type="PROSITE" id="PS00518">
    <property type="entry name" value="ZF_RING_1"/>
    <property type="match status" value="1"/>
</dbReference>
<dbReference type="PROSITE" id="PS50089">
    <property type="entry name" value="ZF_RING_2"/>
    <property type="match status" value="1"/>
</dbReference>
<comment type="function">
    <text evidence="1 4 5">E3 ubiquitin protein ligase that is part of an apoptotic signaling pathway activated by endoplasmic reticulum stress. Stimulates the expression of proteins specific of the unfolded protein response (UPR), ubiquitinates BNIP1 and regulates its localization to the mitochondrion and induces calcium release from the endoplasmic reticulum that ultimately leads to cell apoptosis. Plays a role in the maintenance of intestinal homeostasis and clearance of enteric pathogens (PubMed:34623328). Upon NOD2 stimulation, ubiquitinates the ER stress sensor activating transcription factor 6/ATF6 and promotes the unfolded protein response UPR. Participates in basal level of autophagy maintenance by regulating the ubiquitination of EPHB2. Upon stimulation by ligand EFNB1, ubiquitinates EPHB2 and further recruits MAP1LC3B for autophagy induction (PubMed:33280498). Controls nutrient sensing by ubiquitinating Sestrin-2/SESN2, which is an intracellular sensor of cytosolic leucine and inhibitor of mTORC1 activity.</text>
</comment>
<comment type="catalytic activity">
    <reaction evidence="1">
        <text>S-ubiquitinyl-[E2 ubiquitin-conjugating enzyme]-L-cysteine + [acceptor protein]-L-lysine = [E2 ubiquitin-conjugating enzyme]-L-cysteine + N(6)-ubiquitinyl-[acceptor protein]-L-lysine.</text>
        <dbReference type="EC" id="2.3.2.27"/>
    </reaction>
</comment>
<comment type="pathway">
    <text evidence="1">Protein modification; protein ubiquitination.</text>
</comment>
<comment type="subunit">
    <text evidence="1">Interacts with BNIP1.</text>
</comment>
<comment type="subcellular location">
    <subcellularLocation>
        <location evidence="1">Endoplasmic reticulum membrane</location>
        <topology evidence="2">Multi-pass membrane protein</topology>
    </subcellularLocation>
</comment>
<comment type="domain">
    <text evidence="1">The RING-type domain is required for ubiquitination.</text>
</comment>
<comment type="PTM">
    <text evidence="1">Polyubiquitinated. 'Lys-29'-linked autoubiquitination leads to proteasomal degradation.</text>
</comment>
<comment type="disruption phenotype">
    <text evidence="4 5">Mutant deletion mice demonstrate an increased bacterial burden in the mesenteric lymph nodes and spleen compared with WT mice (PubMed:34623328). They have also a more severe phenotype in the dextran sodium sulfate-induced colitis model, which is due to a defect in autophagy in colon epithelial cells (PubMed:33280498).</text>
</comment>
<comment type="sequence caution" evidence="6">
    <conflict type="erroneous initiation">
        <sequence resource="EMBL-CDS" id="BAB32149"/>
    </conflict>
</comment>
<sequence length="226" mass="24704">MSCTEAPQPIPAGTTTTSTIIALGPTGRLSISVEGDLECLVCREPYNCARSPKLLSCQHTFCAVCLKLLLYVQEDTWSIPCPLCRKVTAVPGGLICSLRDQEAMVGRLALPCPEVRLCPQRLVGSAASATRPANWTGEEEQDTVSVNRVAARRLAVHLLLLALVIVLILPFIYPGVIRWVLAFVIALALLMSTLFCCHPQSQNSNWLCPRTLFCREQKQTQITSIA</sequence>
<feature type="chain" id="PRO_0000261625" description="E3 ubiquitin-protein ligase RNF186">
    <location>
        <begin position="1"/>
        <end position="226"/>
    </location>
</feature>
<feature type="transmembrane region" description="Helical" evidence="2">
    <location>
        <begin position="157"/>
        <end position="177"/>
    </location>
</feature>
<feature type="transmembrane region" description="Helical" evidence="2">
    <location>
        <begin position="179"/>
        <end position="199"/>
    </location>
</feature>
<feature type="zinc finger region" description="RING-type" evidence="3">
    <location>
        <begin position="39"/>
        <end position="85"/>
    </location>
</feature>
<protein>
    <recommendedName>
        <fullName evidence="6">E3 ubiquitin-protein ligase RNF186</fullName>
        <ecNumber evidence="1">2.3.2.27</ecNumber>
    </recommendedName>
    <alternativeName>
        <fullName evidence="7">RING finger protein 186</fullName>
    </alternativeName>
</protein>
<organism>
    <name type="scientific">Mus musculus</name>
    <name type="common">Mouse</name>
    <dbReference type="NCBI Taxonomy" id="10090"/>
    <lineage>
        <taxon>Eukaryota</taxon>
        <taxon>Metazoa</taxon>
        <taxon>Chordata</taxon>
        <taxon>Craniata</taxon>
        <taxon>Vertebrata</taxon>
        <taxon>Euteleostomi</taxon>
        <taxon>Mammalia</taxon>
        <taxon>Eutheria</taxon>
        <taxon>Euarchontoglires</taxon>
        <taxon>Glires</taxon>
        <taxon>Rodentia</taxon>
        <taxon>Myomorpha</taxon>
        <taxon>Muroidea</taxon>
        <taxon>Muridae</taxon>
        <taxon>Murinae</taxon>
        <taxon>Mus</taxon>
        <taxon>Mus</taxon>
    </lineage>
</organism>
<accession>Q9D241</accession>
<accession>Q78R58</accession>
<reference key="1">
    <citation type="journal article" date="2005" name="Science">
        <title>The transcriptional landscape of the mammalian genome.</title>
        <authorList>
            <person name="Carninci P."/>
            <person name="Kasukawa T."/>
            <person name="Katayama S."/>
            <person name="Gough J."/>
            <person name="Frith M.C."/>
            <person name="Maeda N."/>
            <person name="Oyama R."/>
            <person name="Ravasi T."/>
            <person name="Lenhard B."/>
            <person name="Wells C."/>
            <person name="Kodzius R."/>
            <person name="Shimokawa K."/>
            <person name="Bajic V.B."/>
            <person name="Brenner S.E."/>
            <person name="Batalov S."/>
            <person name="Forrest A.R."/>
            <person name="Zavolan M."/>
            <person name="Davis M.J."/>
            <person name="Wilming L.G."/>
            <person name="Aidinis V."/>
            <person name="Allen J.E."/>
            <person name="Ambesi-Impiombato A."/>
            <person name="Apweiler R."/>
            <person name="Aturaliya R.N."/>
            <person name="Bailey T.L."/>
            <person name="Bansal M."/>
            <person name="Baxter L."/>
            <person name="Beisel K.W."/>
            <person name="Bersano T."/>
            <person name="Bono H."/>
            <person name="Chalk A.M."/>
            <person name="Chiu K.P."/>
            <person name="Choudhary V."/>
            <person name="Christoffels A."/>
            <person name="Clutterbuck D.R."/>
            <person name="Crowe M.L."/>
            <person name="Dalla E."/>
            <person name="Dalrymple B.P."/>
            <person name="de Bono B."/>
            <person name="Della Gatta G."/>
            <person name="di Bernardo D."/>
            <person name="Down T."/>
            <person name="Engstrom P."/>
            <person name="Fagiolini M."/>
            <person name="Faulkner G."/>
            <person name="Fletcher C.F."/>
            <person name="Fukushima T."/>
            <person name="Furuno M."/>
            <person name="Futaki S."/>
            <person name="Gariboldi M."/>
            <person name="Georgii-Hemming P."/>
            <person name="Gingeras T.R."/>
            <person name="Gojobori T."/>
            <person name="Green R.E."/>
            <person name="Gustincich S."/>
            <person name="Harbers M."/>
            <person name="Hayashi Y."/>
            <person name="Hensch T.K."/>
            <person name="Hirokawa N."/>
            <person name="Hill D."/>
            <person name="Huminiecki L."/>
            <person name="Iacono M."/>
            <person name="Ikeo K."/>
            <person name="Iwama A."/>
            <person name="Ishikawa T."/>
            <person name="Jakt M."/>
            <person name="Kanapin A."/>
            <person name="Katoh M."/>
            <person name="Kawasawa Y."/>
            <person name="Kelso J."/>
            <person name="Kitamura H."/>
            <person name="Kitano H."/>
            <person name="Kollias G."/>
            <person name="Krishnan S.P."/>
            <person name="Kruger A."/>
            <person name="Kummerfeld S.K."/>
            <person name="Kurochkin I.V."/>
            <person name="Lareau L.F."/>
            <person name="Lazarevic D."/>
            <person name="Lipovich L."/>
            <person name="Liu J."/>
            <person name="Liuni S."/>
            <person name="McWilliam S."/>
            <person name="Madan Babu M."/>
            <person name="Madera M."/>
            <person name="Marchionni L."/>
            <person name="Matsuda H."/>
            <person name="Matsuzawa S."/>
            <person name="Miki H."/>
            <person name="Mignone F."/>
            <person name="Miyake S."/>
            <person name="Morris K."/>
            <person name="Mottagui-Tabar S."/>
            <person name="Mulder N."/>
            <person name="Nakano N."/>
            <person name="Nakauchi H."/>
            <person name="Ng P."/>
            <person name="Nilsson R."/>
            <person name="Nishiguchi S."/>
            <person name="Nishikawa S."/>
            <person name="Nori F."/>
            <person name="Ohara O."/>
            <person name="Okazaki Y."/>
            <person name="Orlando V."/>
            <person name="Pang K.C."/>
            <person name="Pavan W.J."/>
            <person name="Pavesi G."/>
            <person name="Pesole G."/>
            <person name="Petrovsky N."/>
            <person name="Piazza S."/>
            <person name="Reed J."/>
            <person name="Reid J.F."/>
            <person name="Ring B.Z."/>
            <person name="Ringwald M."/>
            <person name="Rost B."/>
            <person name="Ruan Y."/>
            <person name="Salzberg S.L."/>
            <person name="Sandelin A."/>
            <person name="Schneider C."/>
            <person name="Schoenbach C."/>
            <person name="Sekiguchi K."/>
            <person name="Semple C.A."/>
            <person name="Seno S."/>
            <person name="Sessa L."/>
            <person name="Sheng Y."/>
            <person name="Shibata Y."/>
            <person name="Shimada H."/>
            <person name="Shimada K."/>
            <person name="Silva D."/>
            <person name="Sinclair B."/>
            <person name="Sperling S."/>
            <person name="Stupka E."/>
            <person name="Sugiura K."/>
            <person name="Sultana R."/>
            <person name="Takenaka Y."/>
            <person name="Taki K."/>
            <person name="Tammoja K."/>
            <person name="Tan S.L."/>
            <person name="Tang S."/>
            <person name="Taylor M.S."/>
            <person name="Tegner J."/>
            <person name="Teichmann S.A."/>
            <person name="Ueda H.R."/>
            <person name="van Nimwegen E."/>
            <person name="Verardo R."/>
            <person name="Wei C.L."/>
            <person name="Yagi K."/>
            <person name="Yamanishi H."/>
            <person name="Zabarovsky E."/>
            <person name="Zhu S."/>
            <person name="Zimmer A."/>
            <person name="Hide W."/>
            <person name="Bult C."/>
            <person name="Grimmond S.M."/>
            <person name="Teasdale R.D."/>
            <person name="Liu E.T."/>
            <person name="Brusic V."/>
            <person name="Quackenbush J."/>
            <person name="Wahlestedt C."/>
            <person name="Mattick J.S."/>
            <person name="Hume D.A."/>
            <person name="Kai C."/>
            <person name="Sasaki D."/>
            <person name="Tomaru Y."/>
            <person name="Fukuda S."/>
            <person name="Kanamori-Katayama M."/>
            <person name="Suzuki M."/>
            <person name="Aoki J."/>
            <person name="Arakawa T."/>
            <person name="Iida J."/>
            <person name="Imamura K."/>
            <person name="Itoh M."/>
            <person name="Kato T."/>
            <person name="Kawaji H."/>
            <person name="Kawagashira N."/>
            <person name="Kawashima T."/>
            <person name="Kojima M."/>
            <person name="Kondo S."/>
            <person name="Konno H."/>
            <person name="Nakano K."/>
            <person name="Ninomiya N."/>
            <person name="Nishio T."/>
            <person name="Okada M."/>
            <person name="Plessy C."/>
            <person name="Shibata K."/>
            <person name="Shiraki T."/>
            <person name="Suzuki S."/>
            <person name="Tagami M."/>
            <person name="Waki K."/>
            <person name="Watahiki A."/>
            <person name="Okamura-Oho Y."/>
            <person name="Suzuki H."/>
            <person name="Kawai J."/>
            <person name="Hayashizaki Y."/>
        </authorList>
    </citation>
    <scope>NUCLEOTIDE SEQUENCE [LARGE SCALE MRNA]</scope>
    <source>
        <strain>C57BL/6J</strain>
        <tissue>Cecum</tissue>
        <tissue>Urinary bladder</tissue>
    </source>
</reference>
<reference key="2">
    <citation type="journal article" date="2004" name="Genome Res.">
        <title>The status, quality, and expansion of the NIH full-length cDNA project: the Mammalian Gene Collection (MGC).</title>
        <authorList>
            <consortium name="The MGC Project Team"/>
        </authorList>
    </citation>
    <scope>NUCLEOTIDE SEQUENCE [LARGE SCALE MRNA]</scope>
    <source>
        <strain>FVB/N</strain>
        <tissue>Colon</tissue>
    </source>
</reference>
<reference key="3">
    <citation type="journal article" date="2021" name="Autophagy">
        <title>RNF186 regulates EFNB1 (ephrin B1)-EPHB2-induced autophagy in the colonic epithelial cells for the maintenance of intestinal homeostasis.</title>
        <authorList>
            <person name="Zhang H."/>
            <person name="Cui Z."/>
            <person name="Cheng D."/>
            <person name="Du Y."/>
            <person name="Guo X."/>
            <person name="Gao R."/>
            <person name="Chen J."/>
            <person name="Sun W."/>
            <person name="He R."/>
            <person name="Ma X."/>
            <person name="Peng Q."/>
            <person name="Martin B.N."/>
            <person name="Yan W."/>
            <person name="Rong Y."/>
            <person name="Wang C."/>
        </authorList>
    </citation>
    <scope>FUNCTION</scope>
    <scope>DISRUPTION PHENOTYPE</scope>
</reference>
<reference key="4">
    <citation type="journal article" date="2021" name="J. Clin. Invest.">
        <title>Ubiquitination of ATF6 by disease-associated RNF186 promotes the innate receptor-induced unfolded protein response.</title>
        <authorList>
            <person name="Ranjan K."/>
            <person name="Hedl M."/>
            <person name="Sinha S."/>
            <person name="Zhang X."/>
            <person name="Abraham C."/>
        </authorList>
    </citation>
    <scope>DISRUPTION PHENOTYPE</scope>
    <scope>FUNCTION</scope>
</reference>
<evidence type="ECO:0000250" key="1">
    <source>
        <dbReference type="UniProtKB" id="Q9NXI6"/>
    </source>
</evidence>
<evidence type="ECO:0000255" key="2"/>
<evidence type="ECO:0000255" key="3">
    <source>
        <dbReference type="PROSITE-ProRule" id="PRU00175"/>
    </source>
</evidence>
<evidence type="ECO:0000269" key="4">
    <source>
    </source>
</evidence>
<evidence type="ECO:0000269" key="5">
    <source>
    </source>
</evidence>
<evidence type="ECO:0000305" key="6"/>
<evidence type="ECO:0000312" key="7">
    <source>
        <dbReference type="MGI" id="MGI:1914075"/>
    </source>
</evidence>
<proteinExistence type="evidence at transcript level"/>
<gene>
    <name evidence="7" type="primary">Rnf186</name>
</gene>
<name>RN186_MOUSE</name>
<keyword id="KW-0256">Endoplasmic reticulum</keyword>
<keyword id="KW-0472">Membrane</keyword>
<keyword id="KW-0479">Metal-binding</keyword>
<keyword id="KW-1185">Reference proteome</keyword>
<keyword id="KW-0808">Transferase</keyword>
<keyword id="KW-0812">Transmembrane</keyword>
<keyword id="KW-1133">Transmembrane helix</keyword>
<keyword id="KW-0832">Ubl conjugation</keyword>
<keyword id="KW-0862">Zinc</keyword>
<keyword id="KW-0863">Zinc-finger</keyword>